<sequence length="231" mass="24508">MSEIKDVIVQGLWKNNSALVQLLGLCPLLAVTSTATNALGLGLATTLVLTLTNLTISTLRHWTPAEIRIPIYVMIIASVVSAVQMLINAYAFGLYQSLGIFIPLIVTNCIVVGRAEAFAAKKGPALSALDGFSIGMGATCAMFVLGSLREIIGNGTLFDGADALLGSWAKVLRVEIFRTDSPFLLAMLPPGAFIGLGLMLAGKYLIDEKMKKRRTEAVAERALPNGETGNV</sequence>
<dbReference type="EC" id="7.-.-.-" evidence="1"/>
<dbReference type="EMBL" id="CP000243">
    <property type="protein sequence ID" value="ABE07300.1"/>
    <property type="molecule type" value="Genomic_DNA"/>
</dbReference>
<dbReference type="RefSeq" id="WP_001289658.1">
    <property type="nucleotide sequence ID" value="NZ_CP064825.1"/>
</dbReference>
<dbReference type="SMR" id="Q1RBG4"/>
<dbReference type="KEGG" id="eci:UTI89_C1822"/>
<dbReference type="HOGENOM" id="CLU_046659_1_0_6"/>
<dbReference type="Proteomes" id="UP000001952">
    <property type="component" value="Chromosome"/>
</dbReference>
<dbReference type="GO" id="GO:0005886">
    <property type="term" value="C:plasma membrane"/>
    <property type="evidence" value="ECO:0007669"/>
    <property type="project" value="UniProtKB-SubCell"/>
</dbReference>
<dbReference type="GO" id="GO:0022900">
    <property type="term" value="P:electron transport chain"/>
    <property type="evidence" value="ECO:0007669"/>
    <property type="project" value="UniProtKB-UniRule"/>
</dbReference>
<dbReference type="HAMAP" id="MF_00478">
    <property type="entry name" value="RsxE_RnfE"/>
    <property type="match status" value="1"/>
</dbReference>
<dbReference type="InterPro" id="IPR003667">
    <property type="entry name" value="NqrDE/RnfAE"/>
</dbReference>
<dbReference type="InterPro" id="IPR010968">
    <property type="entry name" value="RnfE"/>
</dbReference>
<dbReference type="NCBIfam" id="NF009070">
    <property type="entry name" value="PRK12405.1"/>
    <property type="match status" value="1"/>
</dbReference>
<dbReference type="NCBIfam" id="TIGR01948">
    <property type="entry name" value="rnfE"/>
    <property type="match status" value="1"/>
</dbReference>
<dbReference type="PANTHER" id="PTHR30586">
    <property type="entry name" value="ELECTRON TRANSPORT COMPLEX PROTEIN RNFE"/>
    <property type="match status" value="1"/>
</dbReference>
<dbReference type="PANTHER" id="PTHR30586:SF0">
    <property type="entry name" value="ION-TRANSLOCATING OXIDOREDUCTASE COMPLEX SUBUNIT E"/>
    <property type="match status" value="1"/>
</dbReference>
<dbReference type="Pfam" id="PF02508">
    <property type="entry name" value="Rnf-Nqr"/>
    <property type="match status" value="1"/>
</dbReference>
<dbReference type="PIRSF" id="PIRSF006102">
    <property type="entry name" value="NQR_DE"/>
    <property type="match status" value="1"/>
</dbReference>
<comment type="function">
    <text evidence="1">Part of a membrane-bound complex that couples electron transfer with translocation of ions across the membrane. Required to maintain the reduced state of SoxR.</text>
</comment>
<comment type="subunit">
    <text evidence="1">The complex is composed of six subunits: RsxA, RsxB, RsxC, RsxD, RsxE and RsxG.</text>
</comment>
<comment type="subcellular location">
    <subcellularLocation>
        <location evidence="1">Cell inner membrane</location>
        <topology evidence="1">Multi-pass membrane protein</topology>
    </subcellularLocation>
</comment>
<comment type="similarity">
    <text evidence="1">Belongs to the NqrDE/RnfAE family.</text>
</comment>
<protein>
    <recommendedName>
        <fullName evidence="1">Ion-translocating oxidoreductase complex subunit E</fullName>
        <ecNumber evidence="1">7.-.-.-</ecNumber>
    </recommendedName>
    <alternativeName>
        <fullName evidence="1">Rsx electron transport complex subunit E</fullName>
    </alternativeName>
</protein>
<feature type="chain" id="PRO_1000014089" description="Ion-translocating oxidoreductase complex subunit E">
    <location>
        <begin position="1"/>
        <end position="231"/>
    </location>
</feature>
<feature type="transmembrane region" description="Helical" evidence="1">
    <location>
        <begin position="18"/>
        <end position="38"/>
    </location>
</feature>
<feature type="transmembrane region" description="Helical" evidence="1">
    <location>
        <begin position="39"/>
        <end position="59"/>
    </location>
</feature>
<feature type="transmembrane region" description="Helical" evidence="1">
    <location>
        <begin position="63"/>
        <end position="83"/>
    </location>
</feature>
<feature type="transmembrane region" description="Helical" evidence="1">
    <location>
        <begin position="86"/>
        <end position="106"/>
    </location>
</feature>
<feature type="transmembrane region" description="Helical" evidence="1">
    <location>
        <begin position="125"/>
        <end position="145"/>
    </location>
</feature>
<feature type="transmembrane region" description="Helical" evidence="1">
    <location>
        <begin position="182"/>
        <end position="202"/>
    </location>
</feature>
<evidence type="ECO:0000255" key="1">
    <source>
        <dbReference type="HAMAP-Rule" id="MF_00478"/>
    </source>
</evidence>
<gene>
    <name evidence="1" type="primary">rsxE</name>
    <name type="ordered locus">UTI89_C1822</name>
</gene>
<accession>Q1RBG4</accession>
<reference key="1">
    <citation type="journal article" date="2006" name="Proc. Natl. Acad. Sci. U.S.A.">
        <title>Identification of genes subject to positive selection in uropathogenic strains of Escherichia coli: a comparative genomics approach.</title>
        <authorList>
            <person name="Chen S.L."/>
            <person name="Hung C.-S."/>
            <person name="Xu J."/>
            <person name="Reigstad C.S."/>
            <person name="Magrini V."/>
            <person name="Sabo A."/>
            <person name="Blasiar D."/>
            <person name="Bieri T."/>
            <person name="Meyer R.R."/>
            <person name="Ozersky P."/>
            <person name="Armstrong J.R."/>
            <person name="Fulton R.S."/>
            <person name="Latreille J.P."/>
            <person name="Spieth J."/>
            <person name="Hooton T.M."/>
            <person name="Mardis E.R."/>
            <person name="Hultgren S.J."/>
            <person name="Gordon J.I."/>
        </authorList>
    </citation>
    <scope>NUCLEOTIDE SEQUENCE [LARGE SCALE GENOMIC DNA]</scope>
    <source>
        <strain>UTI89 / UPEC</strain>
    </source>
</reference>
<proteinExistence type="inferred from homology"/>
<name>RSXE_ECOUT</name>
<organism>
    <name type="scientific">Escherichia coli (strain UTI89 / UPEC)</name>
    <dbReference type="NCBI Taxonomy" id="364106"/>
    <lineage>
        <taxon>Bacteria</taxon>
        <taxon>Pseudomonadati</taxon>
        <taxon>Pseudomonadota</taxon>
        <taxon>Gammaproteobacteria</taxon>
        <taxon>Enterobacterales</taxon>
        <taxon>Enterobacteriaceae</taxon>
        <taxon>Escherichia</taxon>
    </lineage>
</organism>
<keyword id="KW-0997">Cell inner membrane</keyword>
<keyword id="KW-1003">Cell membrane</keyword>
<keyword id="KW-0249">Electron transport</keyword>
<keyword id="KW-0472">Membrane</keyword>
<keyword id="KW-1278">Translocase</keyword>
<keyword id="KW-0812">Transmembrane</keyword>
<keyword id="KW-1133">Transmembrane helix</keyword>
<keyword id="KW-0813">Transport</keyword>